<comment type="function">
    <text evidence="1">Major determinant of cell surface composition. Negatively regulates motility, adhesion and synthesis of biofilm exopolysaccharides.</text>
</comment>
<comment type="similarity">
    <text evidence="1">Belongs to the GlgS family.</text>
</comment>
<dbReference type="EMBL" id="CP000802">
    <property type="protein sequence ID" value="ABV07458.1"/>
    <property type="molecule type" value="Genomic_DNA"/>
</dbReference>
<dbReference type="RefSeq" id="WP_000350095.1">
    <property type="nucleotide sequence ID" value="NC_009800.1"/>
</dbReference>
<dbReference type="BMRB" id="A8A4K4"/>
<dbReference type="SMR" id="A8A4K4"/>
<dbReference type="GeneID" id="93778946"/>
<dbReference type="KEGG" id="ecx:EcHS_A3225"/>
<dbReference type="HOGENOM" id="CLU_185971_0_0_6"/>
<dbReference type="GO" id="GO:1902201">
    <property type="term" value="P:negative regulation of bacterial-type flagellum-dependent cell motility"/>
    <property type="evidence" value="ECO:0007669"/>
    <property type="project" value="UniProtKB-UniRule"/>
</dbReference>
<dbReference type="GO" id="GO:1900191">
    <property type="term" value="P:negative regulation of single-species biofilm formation"/>
    <property type="evidence" value="ECO:0007669"/>
    <property type="project" value="UniProtKB-UniRule"/>
</dbReference>
<dbReference type="FunFam" id="1.20.970.20:FF:000001">
    <property type="entry name" value="Surface composition regulator"/>
    <property type="match status" value="1"/>
</dbReference>
<dbReference type="Gene3D" id="1.20.970.20">
    <property type="entry name" value="Glycogen synthesis protein GlgS"/>
    <property type="match status" value="1"/>
</dbReference>
<dbReference type="HAMAP" id="MF_00525">
    <property type="entry name" value="GlgS"/>
    <property type="match status" value="1"/>
</dbReference>
<dbReference type="InterPro" id="IPR015065">
    <property type="entry name" value="GlgS"/>
</dbReference>
<dbReference type="InterPro" id="IPR036295">
    <property type="entry name" value="GlgS_sf"/>
</dbReference>
<dbReference type="NCBIfam" id="NF002793">
    <property type="entry name" value="PRK02922.1"/>
    <property type="match status" value="1"/>
</dbReference>
<dbReference type="Pfam" id="PF08971">
    <property type="entry name" value="GlgS"/>
    <property type="match status" value="1"/>
</dbReference>
<dbReference type="SUPFAM" id="SSF109747">
    <property type="entry name" value="Glycogen synthesis protein GlgS"/>
    <property type="match status" value="1"/>
</dbReference>
<proteinExistence type="inferred from homology"/>
<sequence>MDHSLNSLNNFDFLARSFARMHAEGRPVDILAVTGNMDEEHRTWFCARYAWYCQQMMQARELELEH</sequence>
<organism>
    <name type="scientific">Escherichia coli O9:H4 (strain HS)</name>
    <dbReference type="NCBI Taxonomy" id="331112"/>
    <lineage>
        <taxon>Bacteria</taxon>
        <taxon>Pseudomonadati</taxon>
        <taxon>Pseudomonadota</taxon>
        <taxon>Gammaproteobacteria</taxon>
        <taxon>Enterobacterales</taxon>
        <taxon>Enterobacteriaceae</taxon>
        <taxon>Escherichia</taxon>
    </lineage>
</organism>
<gene>
    <name evidence="1" type="primary">glgS</name>
    <name type="ordered locus">EcHS_A3225</name>
</gene>
<reference key="1">
    <citation type="journal article" date="2008" name="J. Bacteriol.">
        <title>The pangenome structure of Escherichia coli: comparative genomic analysis of E. coli commensal and pathogenic isolates.</title>
        <authorList>
            <person name="Rasko D.A."/>
            <person name="Rosovitz M.J."/>
            <person name="Myers G.S.A."/>
            <person name="Mongodin E.F."/>
            <person name="Fricke W.F."/>
            <person name="Gajer P."/>
            <person name="Crabtree J."/>
            <person name="Sebaihia M."/>
            <person name="Thomson N.R."/>
            <person name="Chaudhuri R."/>
            <person name="Henderson I.R."/>
            <person name="Sperandio V."/>
            <person name="Ravel J."/>
        </authorList>
    </citation>
    <scope>NUCLEOTIDE SEQUENCE [LARGE SCALE GENOMIC DNA]</scope>
    <source>
        <strain>HS</strain>
    </source>
</reference>
<protein>
    <recommendedName>
        <fullName evidence="1">Surface composition regulator</fullName>
    </recommendedName>
</protein>
<name>GLGS_ECOHS</name>
<accession>A8A4K4</accession>
<evidence type="ECO:0000255" key="1">
    <source>
        <dbReference type="HAMAP-Rule" id="MF_00525"/>
    </source>
</evidence>
<feature type="chain" id="PRO_1000060928" description="Surface composition regulator">
    <location>
        <begin position="1"/>
        <end position="66"/>
    </location>
</feature>